<evidence type="ECO:0000256" key="1">
    <source>
        <dbReference type="SAM" id="MobiDB-lite"/>
    </source>
</evidence>
<reference key="1">
    <citation type="journal article" date="1994" name="Science">
        <title>Complete nucleotide sequence of Saccharomyces cerevisiae chromosome VIII.</title>
        <authorList>
            <person name="Johnston M."/>
            <person name="Andrews S."/>
            <person name="Brinkman R."/>
            <person name="Cooper J."/>
            <person name="Ding H."/>
            <person name="Dover J."/>
            <person name="Du Z."/>
            <person name="Favello A."/>
            <person name="Fulton L."/>
            <person name="Gattung S."/>
            <person name="Geisel C."/>
            <person name="Kirsten J."/>
            <person name="Kucaba T."/>
            <person name="Hillier L.W."/>
            <person name="Jier M."/>
            <person name="Johnston L."/>
            <person name="Langston Y."/>
            <person name="Latreille P."/>
            <person name="Louis E.J."/>
            <person name="Macri C."/>
            <person name="Mardis E."/>
            <person name="Menezes S."/>
            <person name="Mouser L."/>
            <person name="Nhan M."/>
            <person name="Rifkin L."/>
            <person name="Riles L."/>
            <person name="St Peter H."/>
            <person name="Trevaskis E."/>
            <person name="Vaughan K."/>
            <person name="Vignati D."/>
            <person name="Wilcox L."/>
            <person name="Wohldman P."/>
            <person name="Waterston R."/>
            <person name="Wilson R."/>
            <person name="Vaudin M."/>
        </authorList>
    </citation>
    <scope>NUCLEOTIDE SEQUENCE [LARGE SCALE GENOMIC DNA]</scope>
    <source>
        <strain>ATCC 204508 / S288c</strain>
    </source>
</reference>
<reference key="2">
    <citation type="journal article" date="2014" name="G3 (Bethesda)">
        <title>The reference genome sequence of Saccharomyces cerevisiae: Then and now.</title>
        <authorList>
            <person name="Engel S.R."/>
            <person name="Dietrich F.S."/>
            <person name="Fisk D.G."/>
            <person name="Binkley G."/>
            <person name="Balakrishnan R."/>
            <person name="Costanzo M.C."/>
            <person name="Dwight S.S."/>
            <person name="Hitz B.C."/>
            <person name="Karra K."/>
            <person name="Nash R.S."/>
            <person name="Weng S."/>
            <person name="Wong E.D."/>
            <person name="Lloyd P."/>
            <person name="Skrzypek M.S."/>
            <person name="Miyasato S.R."/>
            <person name="Simison M."/>
            <person name="Cherry J.M."/>
        </authorList>
    </citation>
    <scope>GENOME REANNOTATION</scope>
    <source>
        <strain>ATCC 204508 / S288c</strain>
    </source>
</reference>
<protein>
    <recommendedName>
        <fullName>Uncharacterized protein YHR218W</fullName>
    </recommendedName>
</protein>
<proteinExistence type="predicted"/>
<name>YH18_YEAST</name>
<feature type="chain" id="PRO_0000202947" description="Uncharacterized protein YHR218W">
    <location>
        <begin position="1"/>
        <end position="603"/>
    </location>
</feature>
<feature type="region of interest" description="Disordered" evidence="1">
    <location>
        <begin position="257"/>
        <end position="281"/>
    </location>
</feature>
<dbReference type="EMBL" id="U00029">
    <property type="protein sequence ID" value="AAB69741.1"/>
    <property type="molecule type" value="Genomic_DNA"/>
</dbReference>
<dbReference type="EMBL" id="BK006934">
    <property type="protein sequence ID" value="DAA06916.1"/>
    <property type="molecule type" value="Genomic_DNA"/>
</dbReference>
<dbReference type="PIR" id="S70303">
    <property type="entry name" value="S70303"/>
</dbReference>
<dbReference type="RefSeq" id="NP_012090.1">
    <property type="nucleotide sequence ID" value="NM_001179349.1"/>
</dbReference>
<dbReference type="BioGRID" id="36652">
    <property type="interactions" value="26"/>
</dbReference>
<dbReference type="FunCoup" id="P38899">
    <property type="interactions" value="105"/>
</dbReference>
<dbReference type="IntAct" id="P38899">
    <property type="interactions" value="2"/>
</dbReference>
<dbReference type="MINT" id="P38899"/>
<dbReference type="PeptideAtlas" id="P38899"/>
<dbReference type="EnsemblFungi" id="YHR218W_mRNA">
    <property type="protein sequence ID" value="YHR218W"/>
    <property type="gene ID" value="YHR218W"/>
</dbReference>
<dbReference type="GeneID" id="856628"/>
<dbReference type="KEGG" id="sce:YHR218W"/>
<dbReference type="AGR" id="SGD:S000001261"/>
<dbReference type="SGD" id="S000001261">
    <property type="gene designation" value="YHR218W"/>
</dbReference>
<dbReference type="VEuPathDB" id="FungiDB:YHR218W"/>
<dbReference type="GeneTree" id="ENSGT00940000153173"/>
<dbReference type="HOGENOM" id="CLU_411727_0_0_1"/>
<dbReference type="InParanoid" id="P38899"/>
<dbReference type="OMA" id="FERSTMT"/>
<dbReference type="OrthoDB" id="4070277at2759"/>
<dbReference type="BioCyc" id="YEAST:G3O-31239-MONOMER"/>
<dbReference type="PRO" id="PR:P38899"/>
<dbReference type="Proteomes" id="UP000002311">
    <property type="component" value="Chromosome VIII"/>
</dbReference>
<dbReference type="RNAct" id="P38899">
    <property type="molecule type" value="protein"/>
</dbReference>
<dbReference type="GO" id="GO:0005524">
    <property type="term" value="F:ATP binding"/>
    <property type="evidence" value="ECO:0007669"/>
    <property type="project" value="InterPro"/>
</dbReference>
<dbReference type="GO" id="GO:0003676">
    <property type="term" value="F:nucleic acid binding"/>
    <property type="evidence" value="ECO:0007669"/>
    <property type="project" value="InterPro"/>
</dbReference>
<dbReference type="FunFam" id="3.40.50.300:FF:001914">
    <property type="entry name" value="YML133C-like protein"/>
    <property type="match status" value="1"/>
</dbReference>
<dbReference type="Gene3D" id="3.40.50.300">
    <property type="entry name" value="P-loop containing nucleotide triphosphate hydrolases"/>
    <property type="match status" value="1"/>
</dbReference>
<dbReference type="InterPro" id="IPR011545">
    <property type="entry name" value="DEAD/DEAH_box_helicase_dom"/>
</dbReference>
<dbReference type="InterPro" id="IPR014001">
    <property type="entry name" value="Helicase_ATP-bd"/>
</dbReference>
<dbReference type="InterPro" id="IPR027417">
    <property type="entry name" value="P-loop_NTPase"/>
</dbReference>
<dbReference type="InterPro" id="IPR050978">
    <property type="entry name" value="Y'_ATP-dependent_helicase"/>
</dbReference>
<dbReference type="PANTHER" id="PTHR31583">
    <property type="match status" value="1"/>
</dbReference>
<dbReference type="PANTHER" id="PTHR31583:SF2">
    <property type="match status" value="1"/>
</dbReference>
<dbReference type="Pfam" id="PF00270">
    <property type="entry name" value="DEAD"/>
    <property type="match status" value="1"/>
</dbReference>
<dbReference type="SMART" id="SM00487">
    <property type="entry name" value="DEXDc"/>
    <property type="match status" value="1"/>
</dbReference>
<dbReference type="SUPFAM" id="SSF52540">
    <property type="entry name" value="P-loop containing nucleoside triphosphate hydrolases"/>
    <property type="match status" value="1"/>
</dbReference>
<sequence length="603" mass="68851">MDRKRSFEKIVVSVMVGKNVQKFLTFVEDEPDFQGGPIPSKYLIPKKINLMVYTLFQVHTLKFNRKDYDTLSLFYLNRGYYNELSFRVLERCYEIASARPNDSSTMRTFTDFVSGTPIVRSLQKSTIRKYGYNLAPYMFLLLHVDELSIFSAYQASLPGEKKVDTERLKRDLCPRKPTEIKYFSQICNDMMNKKDRLGDVLATAQRIRRRYNKNGSSEPRLKTLDGLTSERWIQWLGLESDYHCSFSSTRNAEDVVAGEAASSDHDQKISRVTRKRPREPKSTNDILVAGRKLFGSSFEFRDLHQLRLCHEIYMADTPSVAVQAPPGYGKTELFHLPLIALASKGDVKYVSFLFVPYTVLLANCMIRLGRRGCLNVAPVRNFIEEGCDGVTDLYVGIYDDLASTNFTDRIAAWENIVECTFRTNNVKLGYLIVDEFHNFETEVYRQSQFGGITNLDFDAFEKAIFLSGTAPEAVADAALQRIGLTGLAKKSMDINELKRSEDLSRGLSSYPTRMFNLIKEKSEVPLGHVHKIWKKVESQPEEALKLLLALFEIEPESKAIVVASTTNEVEELACSWRKYFRVVWIHGKLGCCRKGVSHKGVCH</sequence>
<gene>
    <name type="ordered locus">YHR218W</name>
</gene>
<accession>P38899</accession>
<accession>D3DLH2</accession>
<keyword id="KW-1185">Reference proteome</keyword>
<organism>
    <name type="scientific">Saccharomyces cerevisiae (strain ATCC 204508 / S288c)</name>
    <name type="common">Baker's yeast</name>
    <dbReference type="NCBI Taxonomy" id="559292"/>
    <lineage>
        <taxon>Eukaryota</taxon>
        <taxon>Fungi</taxon>
        <taxon>Dikarya</taxon>
        <taxon>Ascomycota</taxon>
        <taxon>Saccharomycotina</taxon>
        <taxon>Saccharomycetes</taxon>
        <taxon>Saccharomycetales</taxon>
        <taxon>Saccharomycetaceae</taxon>
        <taxon>Saccharomyces</taxon>
    </lineage>
</organism>